<evidence type="ECO:0000255" key="1">
    <source>
        <dbReference type="HAMAP-Rule" id="MF_00142"/>
    </source>
</evidence>
<comment type="function">
    <text evidence="1">Involved in iron-sulfur (Fe-S) cluster assembly. May act as a regulator of Fe-S biogenesis.</text>
</comment>
<comment type="similarity">
    <text evidence="1">Belongs to the frataxin family.</text>
</comment>
<sequence>MSDTDYLTRAEAVLAAVERSVDAANDGDADIDLERNGSVLTLTFENGSKIIVNLQPPMKEVWIAAKAGGFHYRFVDGAWRDTRSGDEFFAALTGYATQQAGMPIAFSA</sequence>
<name>CYAY_BURP0</name>
<keyword id="KW-0408">Iron</keyword>
<keyword id="KW-0479">Metal-binding</keyword>
<accession>A3P073</accession>
<protein>
    <recommendedName>
        <fullName evidence="1">Iron-sulfur cluster assembly protein CyaY</fullName>
    </recommendedName>
</protein>
<reference key="1">
    <citation type="journal article" date="2010" name="Genome Biol. Evol.">
        <title>Continuing evolution of Burkholderia mallei through genome reduction and large-scale rearrangements.</title>
        <authorList>
            <person name="Losada L."/>
            <person name="Ronning C.M."/>
            <person name="DeShazer D."/>
            <person name="Woods D."/>
            <person name="Fedorova N."/>
            <person name="Kim H.S."/>
            <person name="Shabalina S.A."/>
            <person name="Pearson T.R."/>
            <person name="Brinkac L."/>
            <person name="Tan P."/>
            <person name="Nandi T."/>
            <person name="Crabtree J."/>
            <person name="Badger J."/>
            <person name="Beckstrom-Sternberg S."/>
            <person name="Saqib M."/>
            <person name="Schutzer S.E."/>
            <person name="Keim P."/>
            <person name="Nierman W.C."/>
        </authorList>
    </citation>
    <scope>NUCLEOTIDE SEQUENCE [LARGE SCALE GENOMIC DNA]</scope>
    <source>
        <strain>1106a</strain>
    </source>
</reference>
<dbReference type="EMBL" id="CP000572">
    <property type="protein sequence ID" value="ABN92596.1"/>
    <property type="molecule type" value="Genomic_DNA"/>
</dbReference>
<dbReference type="RefSeq" id="WP_004196764.1">
    <property type="nucleotide sequence ID" value="NC_009076.1"/>
</dbReference>
<dbReference type="SMR" id="A3P073"/>
<dbReference type="GeneID" id="93061793"/>
<dbReference type="KEGG" id="bpl:BURPS1106A_3764"/>
<dbReference type="HOGENOM" id="CLU_080880_3_0_4"/>
<dbReference type="Proteomes" id="UP000006738">
    <property type="component" value="Chromosome I"/>
</dbReference>
<dbReference type="GO" id="GO:0005829">
    <property type="term" value="C:cytosol"/>
    <property type="evidence" value="ECO:0007669"/>
    <property type="project" value="TreeGrafter"/>
</dbReference>
<dbReference type="GO" id="GO:0008199">
    <property type="term" value="F:ferric iron binding"/>
    <property type="evidence" value="ECO:0007669"/>
    <property type="project" value="InterPro"/>
</dbReference>
<dbReference type="GO" id="GO:0008198">
    <property type="term" value="F:ferrous iron binding"/>
    <property type="evidence" value="ECO:0007669"/>
    <property type="project" value="TreeGrafter"/>
</dbReference>
<dbReference type="GO" id="GO:0016226">
    <property type="term" value="P:iron-sulfur cluster assembly"/>
    <property type="evidence" value="ECO:0007669"/>
    <property type="project" value="UniProtKB-UniRule"/>
</dbReference>
<dbReference type="CDD" id="cd00503">
    <property type="entry name" value="Frataxin"/>
    <property type="match status" value="1"/>
</dbReference>
<dbReference type="Gene3D" id="3.30.920.10">
    <property type="entry name" value="Frataxin/CyaY"/>
    <property type="match status" value="1"/>
</dbReference>
<dbReference type="HAMAP" id="MF_00142">
    <property type="entry name" value="CyaY"/>
    <property type="match status" value="1"/>
</dbReference>
<dbReference type="InterPro" id="IPR047584">
    <property type="entry name" value="CyaY"/>
</dbReference>
<dbReference type="InterPro" id="IPR002908">
    <property type="entry name" value="Frataxin/CyaY"/>
</dbReference>
<dbReference type="InterPro" id="IPR036524">
    <property type="entry name" value="Frataxin/CyaY_sf"/>
</dbReference>
<dbReference type="InterPro" id="IPR020895">
    <property type="entry name" value="Frataxin_CS"/>
</dbReference>
<dbReference type="NCBIfam" id="TIGR03421">
    <property type="entry name" value="FeS_CyaY"/>
    <property type="match status" value="1"/>
</dbReference>
<dbReference type="PANTHER" id="PTHR16821">
    <property type="entry name" value="FRATAXIN"/>
    <property type="match status" value="1"/>
</dbReference>
<dbReference type="PANTHER" id="PTHR16821:SF2">
    <property type="entry name" value="FRATAXIN, MITOCHONDRIAL"/>
    <property type="match status" value="1"/>
</dbReference>
<dbReference type="Pfam" id="PF01491">
    <property type="entry name" value="Frataxin_Cyay"/>
    <property type="match status" value="1"/>
</dbReference>
<dbReference type="SMART" id="SM01219">
    <property type="entry name" value="Frataxin_Cyay"/>
    <property type="match status" value="1"/>
</dbReference>
<dbReference type="SUPFAM" id="SSF55387">
    <property type="entry name" value="Frataxin/Nqo15-like"/>
    <property type="match status" value="1"/>
</dbReference>
<dbReference type="PROSITE" id="PS01344">
    <property type="entry name" value="FRATAXIN_1"/>
    <property type="match status" value="1"/>
</dbReference>
<dbReference type="PROSITE" id="PS50810">
    <property type="entry name" value="FRATAXIN_2"/>
    <property type="match status" value="1"/>
</dbReference>
<proteinExistence type="inferred from homology"/>
<organism>
    <name type="scientific">Burkholderia pseudomallei (strain 1106a)</name>
    <dbReference type="NCBI Taxonomy" id="357348"/>
    <lineage>
        <taxon>Bacteria</taxon>
        <taxon>Pseudomonadati</taxon>
        <taxon>Pseudomonadota</taxon>
        <taxon>Betaproteobacteria</taxon>
        <taxon>Burkholderiales</taxon>
        <taxon>Burkholderiaceae</taxon>
        <taxon>Burkholderia</taxon>
        <taxon>pseudomallei group</taxon>
    </lineage>
</organism>
<gene>
    <name evidence="1" type="primary">cyaY</name>
    <name type="ordered locus">BURPS1106A_3764</name>
</gene>
<feature type="chain" id="PRO_1000010918" description="Iron-sulfur cluster assembly protein CyaY">
    <location>
        <begin position="1"/>
        <end position="108"/>
    </location>
</feature>